<accession>Q92PH7</accession>
<sequence length="743" mass="79229">MTISNTRPITPDLIASHGLKPDEYERILNLIGREPTFTELGIFSAMWNEHCSYKSSKKWLRTLPTKGPRVIQGPGENAGVVDIDDGDCVVFKMESHNHPSYIEPYQGAATGVGGILRDVFTMGARPVAAMNALRFGSPDHPKTRHLVSGVVAGVGGYGNSFGVPTVGGEVEFDARYNGNILVNAFAAGLAKTDAIFYSKAEGVGLPVVYLGAKTGRDGVGGATMASAEFDESIEEKRPTVQVGDPFTEKCLLEACLELMQTGAVIAIQDMGAAGLTCSAVEMGAKGDLGIELDLDKVPVREERMTAYEMMLSESQERMLMVLRPEKEEEAKAIFVKWGLDFAIVGKTTDDLRFRILHQGEEVANLPIKELGDEAPEYDRPWTPARAPSPLATNDVPQADVSDALLKLVGSANNSSRRWVYEQYDTLIQGNSLQLPGGDAGVIRVEGHETKALAFSSDVTPRYVEADPFEGGKQAVAECWRNLTATGALPLAATDNLNFGNPERPEIMSQLVHAIKGIGEACQALDFPIVSGNVSLYNETNGQAILPTPTIGGVGLVRDWSKMARIRFAAANETILLAGAPESWGTHIGQSVYMRDIHGRTDGPAPHVDLGHERKVGDFVRGLIEDGLVTAVHDCSSGGLALAVAEMAIASGIGATIDAPAEHDPIPVFYGEDQGRYVVTVAEGSAETVAARAKAAGVALPVIGRTGGNAVQLGDARPVSVDELRSAHEAWFPNYMGGDLAPDN</sequence>
<gene>
    <name evidence="1" type="primary">purL</name>
    <name type="ordered locus">R01779</name>
    <name type="ORF">SMc00488</name>
</gene>
<dbReference type="EC" id="6.3.5.3" evidence="1"/>
<dbReference type="EMBL" id="AL591688">
    <property type="protein sequence ID" value="CAC46358.1"/>
    <property type="molecule type" value="Genomic_DNA"/>
</dbReference>
<dbReference type="RefSeq" id="NP_385885.1">
    <property type="nucleotide sequence ID" value="NC_003047.1"/>
</dbReference>
<dbReference type="RefSeq" id="WP_010969461.1">
    <property type="nucleotide sequence ID" value="NC_003047.1"/>
</dbReference>
<dbReference type="SMR" id="Q92PH7"/>
<dbReference type="EnsemblBacteria" id="CAC46358">
    <property type="protein sequence ID" value="CAC46358"/>
    <property type="gene ID" value="SMc00488"/>
</dbReference>
<dbReference type="GeneID" id="89576117"/>
<dbReference type="KEGG" id="sme:SMc00488"/>
<dbReference type="PATRIC" id="fig|266834.11.peg.3218"/>
<dbReference type="eggNOG" id="COG0046">
    <property type="taxonomic scope" value="Bacteria"/>
</dbReference>
<dbReference type="HOGENOM" id="CLU_003100_0_1_5"/>
<dbReference type="OrthoDB" id="9804441at2"/>
<dbReference type="UniPathway" id="UPA00074">
    <property type="reaction ID" value="UER00128"/>
</dbReference>
<dbReference type="Proteomes" id="UP000001976">
    <property type="component" value="Chromosome"/>
</dbReference>
<dbReference type="GO" id="GO:0005737">
    <property type="term" value="C:cytoplasm"/>
    <property type="evidence" value="ECO:0007669"/>
    <property type="project" value="UniProtKB-SubCell"/>
</dbReference>
<dbReference type="GO" id="GO:0005524">
    <property type="term" value="F:ATP binding"/>
    <property type="evidence" value="ECO:0007669"/>
    <property type="project" value="UniProtKB-UniRule"/>
</dbReference>
<dbReference type="GO" id="GO:0000287">
    <property type="term" value="F:magnesium ion binding"/>
    <property type="evidence" value="ECO:0007669"/>
    <property type="project" value="UniProtKB-UniRule"/>
</dbReference>
<dbReference type="GO" id="GO:0004642">
    <property type="term" value="F:phosphoribosylformylglycinamidine synthase activity"/>
    <property type="evidence" value="ECO:0007669"/>
    <property type="project" value="UniProtKB-UniRule"/>
</dbReference>
<dbReference type="GO" id="GO:0006189">
    <property type="term" value="P:'de novo' IMP biosynthetic process"/>
    <property type="evidence" value="ECO:0007669"/>
    <property type="project" value="UniProtKB-UniRule"/>
</dbReference>
<dbReference type="CDD" id="cd02203">
    <property type="entry name" value="PurL_repeat1"/>
    <property type="match status" value="1"/>
</dbReference>
<dbReference type="CDD" id="cd02204">
    <property type="entry name" value="PurL_repeat2"/>
    <property type="match status" value="1"/>
</dbReference>
<dbReference type="FunFam" id="3.30.1330.10:FF:000004">
    <property type="entry name" value="Phosphoribosylformylglycinamidine synthase subunit PurL"/>
    <property type="match status" value="1"/>
</dbReference>
<dbReference type="Gene3D" id="3.90.650.10">
    <property type="entry name" value="PurM-like C-terminal domain"/>
    <property type="match status" value="2"/>
</dbReference>
<dbReference type="Gene3D" id="3.30.1330.10">
    <property type="entry name" value="PurM-like, N-terminal domain"/>
    <property type="match status" value="2"/>
</dbReference>
<dbReference type="HAMAP" id="MF_00420">
    <property type="entry name" value="PurL_2"/>
    <property type="match status" value="1"/>
</dbReference>
<dbReference type="InterPro" id="IPR010074">
    <property type="entry name" value="PRibForGlyAmidine_synth_PurL"/>
</dbReference>
<dbReference type="InterPro" id="IPR041609">
    <property type="entry name" value="PurL_linker"/>
</dbReference>
<dbReference type="InterPro" id="IPR010918">
    <property type="entry name" value="PurM-like_C_dom"/>
</dbReference>
<dbReference type="InterPro" id="IPR036676">
    <property type="entry name" value="PurM-like_C_sf"/>
</dbReference>
<dbReference type="InterPro" id="IPR016188">
    <property type="entry name" value="PurM-like_N"/>
</dbReference>
<dbReference type="InterPro" id="IPR036921">
    <property type="entry name" value="PurM-like_N_sf"/>
</dbReference>
<dbReference type="NCBIfam" id="TIGR01736">
    <property type="entry name" value="FGAM_synth_II"/>
    <property type="match status" value="1"/>
</dbReference>
<dbReference type="NCBIfam" id="NF002290">
    <property type="entry name" value="PRK01213.1"/>
    <property type="match status" value="1"/>
</dbReference>
<dbReference type="PANTHER" id="PTHR43555">
    <property type="entry name" value="PHOSPHORIBOSYLFORMYLGLYCINAMIDINE SYNTHASE SUBUNIT PURL"/>
    <property type="match status" value="1"/>
</dbReference>
<dbReference type="PANTHER" id="PTHR43555:SF1">
    <property type="entry name" value="PHOSPHORIBOSYLFORMYLGLYCINAMIDINE SYNTHASE SUBUNIT PURL"/>
    <property type="match status" value="1"/>
</dbReference>
<dbReference type="Pfam" id="PF00586">
    <property type="entry name" value="AIRS"/>
    <property type="match status" value="2"/>
</dbReference>
<dbReference type="Pfam" id="PF02769">
    <property type="entry name" value="AIRS_C"/>
    <property type="match status" value="2"/>
</dbReference>
<dbReference type="Pfam" id="PF18072">
    <property type="entry name" value="FGAR-AT_linker"/>
    <property type="match status" value="1"/>
</dbReference>
<dbReference type="PIRSF" id="PIRSF001587">
    <property type="entry name" value="FGAM_synthase_II"/>
    <property type="match status" value="1"/>
</dbReference>
<dbReference type="SUPFAM" id="SSF56042">
    <property type="entry name" value="PurM C-terminal domain-like"/>
    <property type="match status" value="2"/>
</dbReference>
<dbReference type="SUPFAM" id="SSF55326">
    <property type="entry name" value="PurM N-terminal domain-like"/>
    <property type="match status" value="2"/>
</dbReference>
<keyword id="KW-0067">ATP-binding</keyword>
<keyword id="KW-0963">Cytoplasm</keyword>
<keyword id="KW-0436">Ligase</keyword>
<keyword id="KW-0460">Magnesium</keyword>
<keyword id="KW-0479">Metal-binding</keyword>
<keyword id="KW-0547">Nucleotide-binding</keyword>
<keyword id="KW-0658">Purine biosynthesis</keyword>
<keyword id="KW-1185">Reference proteome</keyword>
<evidence type="ECO:0000255" key="1">
    <source>
        <dbReference type="HAMAP-Rule" id="MF_00420"/>
    </source>
</evidence>
<comment type="function">
    <text evidence="1">Part of the phosphoribosylformylglycinamidine synthase complex involved in the purines biosynthetic pathway. Catalyzes the ATP-dependent conversion of formylglycinamide ribonucleotide (FGAR) and glutamine to yield formylglycinamidine ribonucleotide (FGAM) and glutamate. The FGAM synthase complex is composed of three subunits. PurQ produces an ammonia molecule by converting glutamine to glutamate. PurL transfers the ammonia molecule to FGAR to form FGAM in an ATP-dependent manner. PurS interacts with PurQ and PurL and is thought to assist in the transfer of the ammonia molecule from PurQ to PurL.</text>
</comment>
<comment type="catalytic activity">
    <reaction evidence="1">
        <text>N(2)-formyl-N(1)-(5-phospho-beta-D-ribosyl)glycinamide + L-glutamine + ATP + H2O = 2-formamido-N(1)-(5-O-phospho-beta-D-ribosyl)acetamidine + L-glutamate + ADP + phosphate + H(+)</text>
        <dbReference type="Rhea" id="RHEA:17129"/>
        <dbReference type="ChEBI" id="CHEBI:15377"/>
        <dbReference type="ChEBI" id="CHEBI:15378"/>
        <dbReference type="ChEBI" id="CHEBI:29985"/>
        <dbReference type="ChEBI" id="CHEBI:30616"/>
        <dbReference type="ChEBI" id="CHEBI:43474"/>
        <dbReference type="ChEBI" id="CHEBI:58359"/>
        <dbReference type="ChEBI" id="CHEBI:147286"/>
        <dbReference type="ChEBI" id="CHEBI:147287"/>
        <dbReference type="ChEBI" id="CHEBI:456216"/>
        <dbReference type="EC" id="6.3.5.3"/>
    </reaction>
</comment>
<comment type="pathway">
    <text evidence="1">Purine metabolism; IMP biosynthesis via de novo pathway; 5-amino-1-(5-phospho-D-ribosyl)imidazole from N(2)-formyl-N(1)-(5-phospho-D-ribosyl)glycinamide: step 1/2.</text>
</comment>
<comment type="subunit">
    <text evidence="1">Monomer. Part of the FGAM synthase complex composed of 1 PurL, 1 PurQ and 2 PurS subunits.</text>
</comment>
<comment type="subcellular location">
    <subcellularLocation>
        <location evidence="1">Cytoplasm</location>
    </subcellularLocation>
</comment>
<comment type="similarity">
    <text evidence="1">Belongs to the FGAMS family.</text>
</comment>
<protein>
    <recommendedName>
        <fullName evidence="1">Phosphoribosylformylglycinamidine synthase subunit PurL</fullName>
        <shortName evidence="1">FGAM synthase</shortName>
        <ecNumber evidence="1">6.3.5.3</ecNumber>
    </recommendedName>
    <alternativeName>
        <fullName evidence="1">Formylglycinamide ribonucleotide amidotransferase subunit II</fullName>
        <shortName evidence="1">FGAR amidotransferase II</shortName>
        <shortName evidence="1">FGAR-AT II</shortName>
    </alternativeName>
    <alternativeName>
        <fullName evidence="1">Glutamine amidotransferase PurL</fullName>
    </alternativeName>
    <alternativeName>
        <fullName evidence="1">Phosphoribosylformylglycinamidine synthase subunit II</fullName>
    </alternativeName>
</protein>
<reference key="1">
    <citation type="journal article" date="2001" name="Proc. Natl. Acad. Sci. U.S.A.">
        <title>Analysis of the chromosome sequence of the legume symbiont Sinorhizobium meliloti strain 1021.</title>
        <authorList>
            <person name="Capela D."/>
            <person name="Barloy-Hubler F."/>
            <person name="Gouzy J."/>
            <person name="Bothe G."/>
            <person name="Ampe F."/>
            <person name="Batut J."/>
            <person name="Boistard P."/>
            <person name="Becker A."/>
            <person name="Boutry M."/>
            <person name="Cadieu E."/>
            <person name="Dreano S."/>
            <person name="Gloux S."/>
            <person name="Godrie T."/>
            <person name="Goffeau A."/>
            <person name="Kahn D."/>
            <person name="Kiss E."/>
            <person name="Lelaure V."/>
            <person name="Masuy D."/>
            <person name="Pohl T."/>
            <person name="Portetelle D."/>
            <person name="Puehler A."/>
            <person name="Purnelle B."/>
            <person name="Ramsperger U."/>
            <person name="Renard C."/>
            <person name="Thebault P."/>
            <person name="Vandenbol M."/>
            <person name="Weidner S."/>
            <person name="Galibert F."/>
        </authorList>
    </citation>
    <scope>NUCLEOTIDE SEQUENCE [LARGE SCALE GENOMIC DNA]</scope>
    <source>
        <strain>1021</strain>
    </source>
</reference>
<reference key="2">
    <citation type="journal article" date="2001" name="Science">
        <title>The composite genome of the legume symbiont Sinorhizobium meliloti.</title>
        <authorList>
            <person name="Galibert F."/>
            <person name="Finan T.M."/>
            <person name="Long S.R."/>
            <person name="Puehler A."/>
            <person name="Abola P."/>
            <person name="Ampe F."/>
            <person name="Barloy-Hubler F."/>
            <person name="Barnett M.J."/>
            <person name="Becker A."/>
            <person name="Boistard P."/>
            <person name="Bothe G."/>
            <person name="Boutry M."/>
            <person name="Bowser L."/>
            <person name="Buhrmester J."/>
            <person name="Cadieu E."/>
            <person name="Capela D."/>
            <person name="Chain P."/>
            <person name="Cowie A."/>
            <person name="Davis R.W."/>
            <person name="Dreano S."/>
            <person name="Federspiel N.A."/>
            <person name="Fisher R.F."/>
            <person name="Gloux S."/>
            <person name="Godrie T."/>
            <person name="Goffeau A."/>
            <person name="Golding B."/>
            <person name="Gouzy J."/>
            <person name="Gurjal M."/>
            <person name="Hernandez-Lucas I."/>
            <person name="Hong A."/>
            <person name="Huizar L."/>
            <person name="Hyman R.W."/>
            <person name="Jones T."/>
            <person name="Kahn D."/>
            <person name="Kahn M.L."/>
            <person name="Kalman S."/>
            <person name="Keating D.H."/>
            <person name="Kiss E."/>
            <person name="Komp C."/>
            <person name="Lelaure V."/>
            <person name="Masuy D."/>
            <person name="Palm C."/>
            <person name="Peck M.C."/>
            <person name="Pohl T.M."/>
            <person name="Portetelle D."/>
            <person name="Purnelle B."/>
            <person name="Ramsperger U."/>
            <person name="Surzycki R."/>
            <person name="Thebault P."/>
            <person name="Vandenbol M."/>
            <person name="Vorhoelter F.J."/>
            <person name="Weidner S."/>
            <person name="Wells D.H."/>
            <person name="Wong K."/>
            <person name="Yeh K.-C."/>
            <person name="Batut J."/>
        </authorList>
    </citation>
    <scope>NUCLEOTIDE SEQUENCE [LARGE SCALE GENOMIC DNA]</scope>
    <source>
        <strain>1021</strain>
    </source>
</reference>
<name>PURL_RHIME</name>
<proteinExistence type="inferred from homology"/>
<organism>
    <name type="scientific">Rhizobium meliloti (strain 1021)</name>
    <name type="common">Ensifer meliloti</name>
    <name type="synonym">Sinorhizobium meliloti</name>
    <dbReference type="NCBI Taxonomy" id="266834"/>
    <lineage>
        <taxon>Bacteria</taxon>
        <taxon>Pseudomonadati</taxon>
        <taxon>Pseudomonadota</taxon>
        <taxon>Alphaproteobacteria</taxon>
        <taxon>Hyphomicrobiales</taxon>
        <taxon>Rhizobiaceae</taxon>
        <taxon>Sinorhizobium/Ensifer group</taxon>
        <taxon>Sinorhizobium</taxon>
    </lineage>
</organism>
<feature type="chain" id="PRO_0000100482" description="Phosphoribosylformylglycinamidine synthase subunit PurL">
    <location>
        <begin position="1"/>
        <end position="743"/>
    </location>
</feature>
<feature type="active site" evidence="1">
    <location>
        <position position="50"/>
    </location>
</feature>
<feature type="active site" description="Proton acceptor" evidence="1">
    <location>
        <position position="96"/>
    </location>
</feature>
<feature type="binding site" evidence="1">
    <location>
        <position position="53"/>
    </location>
    <ligand>
        <name>ATP</name>
        <dbReference type="ChEBI" id="CHEBI:30616"/>
    </ligand>
</feature>
<feature type="binding site" evidence="1">
    <location>
        <position position="92"/>
    </location>
    <ligand>
        <name>ATP</name>
        <dbReference type="ChEBI" id="CHEBI:30616"/>
    </ligand>
</feature>
<feature type="binding site" evidence="1">
    <location>
        <position position="94"/>
    </location>
    <ligand>
        <name>Mg(2+)</name>
        <dbReference type="ChEBI" id="CHEBI:18420"/>
        <label>1</label>
    </ligand>
</feature>
<feature type="binding site" evidence="1">
    <location>
        <begin position="95"/>
        <end position="98"/>
    </location>
    <ligand>
        <name>substrate</name>
    </ligand>
</feature>
<feature type="binding site" evidence="1">
    <location>
        <position position="117"/>
    </location>
    <ligand>
        <name>substrate</name>
    </ligand>
</feature>
<feature type="binding site" evidence="1">
    <location>
        <position position="118"/>
    </location>
    <ligand>
        <name>Mg(2+)</name>
        <dbReference type="ChEBI" id="CHEBI:18420"/>
        <label>2</label>
    </ligand>
</feature>
<feature type="binding site" evidence="1">
    <location>
        <position position="241"/>
    </location>
    <ligand>
        <name>substrate</name>
    </ligand>
</feature>
<feature type="binding site" evidence="1">
    <location>
        <position position="269"/>
    </location>
    <ligand>
        <name>Mg(2+)</name>
        <dbReference type="ChEBI" id="CHEBI:18420"/>
        <label>2</label>
    </ligand>
</feature>
<feature type="binding site" evidence="1">
    <location>
        <begin position="313"/>
        <end position="315"/>
    </location>
    <ligand>
        <name>substrate</name>
    </ligand>
</feature>
<feature type="binding site" evidence="1">
    <location>
        <position position="494"/>
    </location>
    <ligand>
        <name>ATP</name>
        <dbReference type="ChEBI" id="CHEBI:30616"/>
    </ligand>
</feature>
<feature type="binding site" evidence="1">
    <location>
        <position position="531"/>
    </location>
    <ligand>
        <name>ATP</name>
        <dbReference type="ChEBI" id="CHEBI:30616"/>
    </ligand>
</feature>
<feature type="binding site" evidence="1">
    <location>
        <position position="532"/>
    </location>
    <ligand>
        <name>Mg(2+)</name>
        <dbReference type="ChEBI" id="CHEBI:18420"/>
        <label>1</label>
    </ligand>
</feature>
<feature type="binding site" evidence="1">
    <location>
        <position position="534"/>
    </location>
    <ligand>
        <name>substrate</name>
    </ligand>
</feature>